<accession>A0A0A7HF73</accession>
<name>CAS6_STRTR</name>
<evidence type="ECO:0000250" key="1">
    <source>
        <dbReference type="UniProtKB" id="Q53WG9"/>
    </source>
</evidence>
<evidence type="ECO:0000269" key="2">
    <source>
    </source>
</evidence>
<evidence type="ECO:0000269" key="3">
    <source>
    </source>
</evidence>
<evidence type="ECO:0000303" key="4">
    <source>
    </source>
</evidence>
<evidence type="ECO:0000305" key="5"/>
<evidence type="ECO:0000305" key="6">
    <source>
    </source>
</evidence>
<evidence type="ECO:0000305" key="7">
    <source>
    </source>
</evidence>
<evidence type="ECO:0007829" key="8">
    <source>
        <dbReference type="PDB" id="6FJW"/>
    </source>
</evidence>
<feature type="chain" id="PRO_0000446115" description="CRISPR-associated endoribonuclease Cas6">
    <location>
        <begin position="1"/>
        <end position="243"/>
    </location>
</feature>
<feature type="strand" evidence="8">
    <location>
        <begin position="2"/>
        <end position="9"/>
    </location>
</feature>
<feature type="helix" evidence="8">
    <location>
        <begin position="15"/>
        <end position="27"/>
    </location>
</feature>
<feature type="helix" evidence="8">
    <location>
        <begin position="32"/>
        <end position="38"/>
    </location>
</feature>
<feature type="strand" evidence="8">
    <location>
        <begin position="41"/>
        <end position="43"/>
    </location>
</feature>
<feature type="strand" evidence="8">
    <location>
        <begin position="45"/>
        <end position="52"/>
    </location>
</feature>
<feature type="strand" evidence="8">
    <location>
        <begin position="54"/>
        <end position="63"/>
    </location>
</feature>
<feature type="helix" evidence="8">
    <location>
        <begin position="66"/>
        <end position="78"/>
    </location>
</feature>
<feature type="strand" evidence="8">
    <location>
        <begin position="94"/>
        <end position="99"/>
    </location>
</feature>
<feature type="helix" evidence="8">
    <location>
        <begin position="102"/>
        <end position="109"/>
    </location>
</feature>
<feature type="strand" evidence="8">
    <location>
        <begin position="116"/>
        <end position="126"/>
    </location>
</feature>
<feature type="strand" evidence="8">
    <location>
        <begin position="131"/>
        <end position="137"/>
    </location>
</feature>
<feature type="helix" evidence="8">
    <location>
        <begin position="140"/>
        <end position="154"/>
    </location>
</feature>
<feature type="helix" evidence="8">
    <location>
        <begin position="163"/>
        <end position="171"/>
    </location>
</feature>
<feature type="strand" evidence="8">
    <location>
        <begin position="173"/>
        <end position="182"/>
    </location>
</feature>
<feature type="strand" evidence="8">
    <location>
        <begin position="195"/>
        <end position="203"/>
    </location>
</feature>
<feature type="helix" evidence="8">
    <location>
        <begin position="207"/>
        <end position="223"/>
    </location>
</feature>
<feature type="strand" evidence="8">
    <location>
        <begin position="225"/>
        <end position="227"/>
    </location>
</feature>
<feature type="helix" evidence="8">
    <location>
        <begin position="229"/>
        <end position="231"/>
    </location>
</feature>
<feature type="strand" evidence="8">
    <location>
        <begin position="236"/>
        <end position="238"/>
    </location>
</feature>
<organism>
    <name type="scientific">Streptococcus thermophilus</name>
    <dbReference type="NCBI Taxonomy" id="1308"/>
    <lineage>
        <taxon>Bacteria</taxon>
        <taxon>Bacillati</taxon>
        <taxon>Bacillota</taxon>
        <taxon>Bacilli</taxon>
        <taxon>Lactobacillales</taxon>
        <taxon>Streptococcaceae</taxon>
        <taxon>Streptococcus</taxon>
    </lineage>
</organism>
<reference key="1">
    <citation type="journal article" date="2014" name="Mol. Cell">
        <title>Programmable RNA shredding by the type III-A CRISPR-Cas system of Streptococcus thermophilus.</title>
        <authorList>
            <person name="Tamulaitis G."/>
            <person name="Kazlauskiene M."/>
            <person name="Manakova E."/>
            <person name="Venclovas C."/>
            <person name="Nwokeoji A.O."/>
            <person name="Dickman M.J."/>
            <person name="Horvath P."/>
            <person name="Siksnys V."/>
        </authorList>
    </citation>
    <scope>NUCLEOTIDE SEQUENCE [GENOMIC DNA]</scope>
    <scope>FUNCTION IN PHAGE RESISTANCE</scope>
    <scope>TARGETS SSRNA</scope>
    <scope>SUBUNIT</scope>
    <scope>ANTIVIRAL DEFENSE</scope>
    <source>
        <strain>DGCC8004</strain>
    </source>
</reference>
<reference key="2">
    <citation type="journal article" date="2016" name="Mol. Cell">
        <title>Spatiotemporal control of type III-A CRISPR-Cas immunity: coupling DNA degradation with the target RNA recognition.</title>
        <authorList>
            <person name="Kazlauskiene M."/>
            <person name="Tamulaitis G."/>
            <person name="Kostiuk G."/>
            <person name="Venclovas C."/>
            <person name="Siksnys V."/>
        </authorList>
    </citation>
    <scope>FUNCTION</scope>
    <scope>SUBUNIT</scope>
    <source>
        <strain>DGCC8004</strain>
    </source>
</reference>
<keyword id="KW-0002">3D-structure</keyword>
<keyword id="KW-0051">Antiviral defense</keyword>
<keyword id="KW-0255">Endonuclease</keyword>
<keyword id="KW-0378">Hydrolase</keyword>
<keyword id="KW-0540">Nuclease</keyword>
<keyword id="KW-0694">RNA-binding</keyword>
<dbReference type="EC" id="3.1.-.-"/>
<dbReference type="EMBL" id="KM222358">
    <property type="protein sequence ID" value="AIZ03603.1"/>
    <property type="molecule type" value="Genomic_DNA"/>
</dbReference>
<dbReference type="RefSeq" id="WP_014621546.1">
    <property type="nucleotide sequence ID" value="NZ_JBAJIC010000006.1"/>
</dbReference>
<dbReference type="PDB" id="6FJW">
    <property type="method" value="X-ray"/>
    <property type="resolution" value="2.70 A"/>
    <property type="chains" value="A=1-243"/>
</dbReference>
<dbReference type="PDBsum" id="6FJW"/>
<dbReference type="SMR" id="A0A0A7HF73"/>
<dbReference type="GO" id="GO:0004519">
    <property type="term" value="F:endonuclease activity"/>
    <property type="evidence" value="ECO:0007669"/>
    <property type="project" value="UniProtKB-KW"/>
</dbReference>
<dbReference type="GO" id="GO:0003723">
    <property type="term" value="F:RNA binding"/>
    <property type="evidence" value="ECO:0007669"/>
    <property type="project" value="UniProtKB-KW"/>
</dbReference>
<dbReference type="GO" id="GO:0051607">
    <property type="term" value="P:defense response to virus"/>
    <property type="evidence" value="ECO:0007669"/>
    <property type="project" value="UniProtKB-KW"/>
</dbReference>
<dbReference type="CDD" id="cd09652">
    <property type="entry name" value="Cas6"/>
    <property type="match status" value="1"/>
</dbReference>
<dbReference type="Gene3D" id="3.30.70.1900">
    <property type="match status" value="1"/>
</dbReference>
<dbReference type="InterPro" id="IPR019267">
    <property type="entry name" value="CRISPR-assoc_Cas6_C"/>
</dbReference>
<dbReference type="InterPro" id="IPR010156">
    <property type="entry name" value="CRISPR-assoc_prot_Cas6"/>
</dbReference>
<dbReference type="NCBIfam" id="TIGR01877">
    <property type="entry name" value="cas_cas6"/>
    <property type="match status" value="1"/>
</dbReference>
<dbReference type="Pfam" id="PF10040">
    <property type="entry name" value="CRISPR_Cas6"/>
    <property type="match status" value="1"/>
</dbReference>
<sequence length="243" mass="28281">MKKLVFTFKRIDHPAQDLAVKFHGFLMEQLDSDYVDYLHQQQTNPYATKVIQGKENTQWVVHLLTDDHEDKVFMTLLQIKEVSLNDLPKLSVEKVEIQELGADKLLEIFNSEENQTYFSIIFETPTGFKSQGSYVIFPSMRLIFQSLMQKYGRLVENQPEIEEDTLDYLSEHSTITNYRLETSYFRVHRQRIPAFRGKLTFKVQGAKTLKAYVKMLLTFGEYSGLGMKTSLGMGGIKLEERKD</sequence>
<protein>
    <recommendedName>
        <fullName>CRISPR-associated endoribonuclease Cas6</fullName>
        <ecNumber>3.1.-.-</ecNumber>
    </recommendedName>
    <alternativeName>
        <fullName>Cas6 endoRNase</fullName>
    </alternativeName>
    <alternativeName>
        <fullName>Cas6 endoribonuclease</fullName>
    </alternativeName>
</protein>
<comment type="function">
    <text evidence="2">CRISPR (clustered regularly interspaced short palindromic repeat) is an adaptive immune system that provides protection against mobile genetic elements (viruses, transposable elements and conjugative plasmids). CRISPR clusters contain spacers, sequences complementary to antecedent mobile elements, and target invading nucleic acids. CRISPR clusters are transcribed and processed into CRISPR RNA (crRNA). The type III-A Csm effector complex binds crRNA and acts as a crRNA-guided RNase, DNase and cyclic oligoadenylate synthase; binding of target RNA cognate to the crRNA is required for all activities. In a heterologous host this Csm effector complex restricts ssRNA phage MS2, suggesting it may target RNA viruses in vivo.</text>
</comment>
<comment type="function">
    <text evidence="3">Csm functions as a non-specific ssDNase. Base-pairing between crRNA and target RNA to form a ternary Csm complex activates a ssDNase activity; target RNA cleavage suppresses the ssDNase, a temporal control that prevents uncontrolled DNA degradation. Viral RNA transcripts probably tether the Csm complex to the viral genome, recruiting Cas10 ssDNA activity which is able to degrade DNA in the transcription bubble, spatially controlling the DNase activity.</text>
</comment>
<comment type="function">
    <text evidence="1">This protein processes pre-crRNA into individual crRNA units.</text>
</comment>
<comment type="subunit">
    <text evidence="2 6 7">Part of the Csm effector complex that includes at least Cas10(1), Csm2(3), Csm3(5), Csm4(1); the presence of Csm5 and Cas6 may depend on the processing state of precursor crRNA (PubMed:25458845). Csm with a precursor crRNA does not include Csm5, while Cas6, the enzyme probably involved in pre-crRNA processing, is found associated with a subset of the Csm complex that is probably in the process of pre-crRNA maturation (Probable). The Csm complex is elongated and slightly twisted with a maximal length of 215 Angstroms and a diameter of 75-80 Angstroms (PubMed:25458845). It has been modeled to have a central protein filamant of Csm3 subunits along which the dsRNA helix of paired crRNA and target RNA binds. The filament is capped at one end by Cas10 and Csm4 and at the other end by Csm5; ssDNA is thought to bind to the N-terminal HD domain of Cas10 (Probable).</text>
</comment>
<comment type="miscellaneous">
    <text evidence="2">Encoded in a type III-A CRISPR locus.</text>
</comment>
<comment type="similarity">
    <text evidence="5">Belongs to the CRISPR-associated endoribonuclease Cas6 family.</text>
</comment>
<gene>
    <name evidence="4" type="primary">cas6</name>
</gene>
<proteinExistence type="evidence at protein level"/>